<reference key="1">
    <citation type="journal article" date="2006" name="Appl. Environ. Microbiol.">
        <title>Genome sequence of the chemolithoautotrophic nitrite-oxidizing bacterium Nitrobacter winogradskyi Nb-255.</title>
        <authorList>
            <person name="Starkenburg S.R."/>
            <person name="Chain P.S.G."/>
            <person name="Sayavedra-Soto L.A."/>
            <person name="Hauser L."/>
            <person name="Land M.L."/>
            <person name="Larimer F.W."/>
            <person name="Malfatti S.A."/>
            <person name="Klotz M.G."/>
            <person name="Bottomley P.J."/>
            <person name="Arp D.J."/>
            <person name="Hickey W.J."/>
        </authorList>
    </citation>
    <scope>NUCLEOTIDE SEQUENCE [LARGE SCALE GENOMIC DNA]</scope>
    <source>
        <strain>ATCC 25391 / DSM 10237 / CIP 104748 / NCIMB 11846 / Nb-255</strain>
    </source>
</reference>
<protein>
    <recommendedName>
        <fullName evidence="1">Protein-glutamate methylesterase/protein-glutamine glutaminase</fullName>
        <ecNumber evidence="1">3.1.1.61</ecNumber>
        <ecNumber evidence="1">3.5.1.44</ecNumber>
    </recommendedName>
</protein>
<sequence length="425" mass="45007">MGMSTAVASPVALDSGKLEPLRVMVVDDSVVIRGLISRWIEAEPDMMVAASLRTGRDAVSQVERADPDVVVLDIEMPELDGISALPQLLAKKRNLIVIMASTLTRRNAEISFKALSLGASDYIPKPESTREVAAADIFRHDLMQKIRHLAAKRRRPATVASPPPDHDDYGSNASTIMNAVDSNISERDAGGKPRRTFPHPALVQREQQPRSAQAARAMSRPQPTLRSFSAHLPRALLIGSSTGGPQALMTLVAGIGPVIDRCPVLITQHMPPTFTTILAEHLARAAGRPAHEGVDQEIVKQGHIYLAPGGRHMRVARKGADAVIVLDNGPAVNFCKPAVDPLFMSAIDVWQGGALAVILTGMGSDGMRGGTQIVAAGGSIIAQDEASSVVWGMPGAAVQAGICAAVLPLQQIAPKLVRLFAGDGL</sequence>
<evidence type="ECO:0000255" key="1">
    <source>
        <dbReference type="HAMAP-Rule" id="MF_00099"/>
    </source>
</evidence>
<evidence type="ECO:0000256" key="2">
    <source>
        <dbReference type="SAM" id="MobiDB-lite"/>
    </source>
</evidence>
<name>CHEB_NITWN</name>
<dbReference type="EC" id="3.1.1.61" evidence="1"/>
<dbReference type="EC" id="3.5.1.44" evidence="1"/>
<dbReference type="EMBL" id="CP000115">
    <property type="protein sequence ID" value="ABA03790.1"/>
    <property type="molecule type" value="Genomic_DNA"/>
</dbReference>
<dbReference type="SMR" id="Q3SVA1"/>
<dbReference type="STRING" id="323098.Nwi_0523"/>
<dbReference type="KEGG" id="nwi:Nwi_0523"/>
<dbReference type="eggNOG" id="COG2201">
    <property type="taxonomic scope" value="Bacteria"/>
</dbReference>
<dbReference type="HOGENOM" id="CLU_000445_51_0_5"/>
<dbReference type="Proteomes" id="UP000002531">
    <property type="component" value="Chromosome"/>
</dbReference>
<dbReference type="GO" id="GO:0005737">
    <property type="term" value="C:cytoplasm"/>
    <property type="evidence" value="ECO:0007669"/>
    <property type="project" value="UniProtKB-SubCell"/>
</dbReference>
<dbReference type="GO" id="GO:0000156">
    <property type="term" value="F:phosphorelay response regulator activity"/>
    <property type="evidence" value="ECO:0007669"/>
    <property type="project" value="InterPro"/>
</dbReference>
<dbReference type="GO" id="GO:0008984">
    <property type="term" value="F:protein-glutamate methylesterase activity"/>
    <property type="evidence" value="ECO:0007669"/>
    <property type="project" value="UniProtKB-UniRule"/>
</dbReference>
<dbReference type="GO" id="GO:0050568">
    <property type="term" value="F:protein-glutamine glutaminase activity"/>
    <property type="evidence" value="ECO:0007669"/>
    <property type="project" value="UniProtKB-UniRule"/>
</dbReference>
<dbReference type="GO" id="GO:0006935">
    <property type="term" value="P:chemotaxis"/>
    <property type="evidence" value="ECO:0007669"/>
    <property type="project" value="UniProtKB-UniRule"/>
</dbReference>
<dbReference type="CDD" id="cd16432">
    <property type="entry name" value="CheB_Rec"/>
    <property type="match status" value="1"/>
</dbReference>
<dbReference type="CDD" id="cd17541">
    <property type="entry name" value="REC_CheB-like"/>
    <property type="match status" value="1"/>
</dbReference>
<dbReference type="Gene3D" id="3.40.50.2300">
    <property type="match status" value="1"/>
</dbReference>
<dbReference type="Gene3D" id="3.40.50.180">
    <property type="entry name" value="Methylesterase CheB, C-terminal domain"/>
    <property type="match status" value="1"/>
</dbReference>
<dbReference type="HAMAP" id="MF_00099">
    <property type="entry name" value="CheB_chemtxs"/>
    <property type="match status" value="1"/>
</dbReference>
<dbReference type="InterPro" id="IPR008248">
    <property type="entry name" value="CheB-like"/>
</dbReference>
<dbReference type="InterPro" id="IPR035909">
    <property type="entry name" value="CheB_C"/>
</dbReference>
<dbReference type="InterPro" id="IPR011006">
    <property type="entry name" value="CheY-like_superfamily"/>
</dbReference>
<dbReference type="InterPro" id="IPR000673">
    <property type="entry name" value="Sig_transdc_resp-reg_Me-estase"/>
</dbReference>
<dbReference type="InterPro" id="IPR001789">
    <property type="entry name" value="Sig_transdc_resp-reg_receiver"/>
</dbReference>
<dbReference type="NCBIfam" id="NF001965">
    <property type="entry name" value="PRK00742.1"/>
    <property type="match status" value="1"/>
</dbReference>
<dbReference type="PANTHER" id="PTHR42872">
    <property type="entry name" value="PROTEIN-GLUTAMATE METHYLESTERASE/PROTEIN-GLUTAMINE GLUTAMINASE"/>
    <property type="match status" value="1"/>
</dbReference>
<dbReference type="PANTHER" id="PTHR42872:SF3">
    <property type="entry name" value="PROTEIN-GLUTAMATE METHYLESTERASE_PROTEIN-GLUTAMINE GLUTAMINASE 1"/>
    <property type="match status" value="1"/>
</dbReference>
<dbReference type="Pfam" id="PF01339">
    <property type="entry name" value="CheB_methylest"/>
    <property type="match status" value="1"/>
</dbReference>
<dbReference type="Pfam" id="PF00072">
    <property type="entry name" value="Response_reg"/>
    <property type="match status" value="1"/>
</dbReference>
<dbReference type="SMART" id="SM00448">
    <property type="entry name" value="REC"/>
    <property type="match status" value="1"/>
</dbReference>
<dbReference type="SUPFAM" id="SSF52172">
    <property type="entry name" value="CheY-like"/>
    <property type="match status" value="1"/>
</dbReference>
<dbReference type="SUPFAM" id="SSF52738">
    <property type="entry name" value="Methylesterase CheB, C-terminal domain"/>
    <property type="match status" value="1"/>
</dbReference>
<dbReference type="PROSITE" id="PS50122">
    <property type="entry name" value="CHEB"/>
    <property type="match status" value="1"/>
</dbReference>
<dbReference type="PROSITE" id="PS50110">
    <property type="entry name" value="RESPONSE_REGULATORY"/>
    <property type="match status" value="1"/>
</dbReference>
<keyword id="KW-0145">Chemotaxis</keyword>
<keyword id="KW-0963">Cytoplasm</keyword>
<keyword id="KW-0378">Hydrolase</keyword>
<keyword id="KW-0597">Phosphoprotein</keyword>
<keyword id="KW-1185">Reference proteome</keyword>
<accession>Q3SVA1</accession>
<organism>
    <name type="scientific">Nitrobacter winogradskyi (strain ATCC 25391 / DSM 10237 / CIP 104748 / NCIMB 11846 / Nb-255)</name>
    <dbReference type="NCBI Taxonomy" id="323098"/>
    <lineage>
        <taxon>Bacteria</taxon>
        <taxon>Pseudomonadati</taxon>
        <taxon>Pseudomonadota</taxon>
        <taxon>Alphaproteobacteria</taxon>
        <taxon>Hyphomicrobiales</taxon>
        <taxon>Nitrobacteraceae</taxon>
        <taxon>Nitrobacter</taxon>
    </lineage>
</organism>
<comment type="function">
    <text evidence="1">Involved in chemotaxis. Part of a chemotaxis signal transduction system that modulates chemotaxis in response to various stimuli. Catalyzes the demethylation of specific methylglutamate residues introduced into the chemoreceptors (methyl-accepting chemotaxis proteins or MCP) by CheR. Also mediates the irreversible deamidation of specific glutamine residues to glutamic acid.</text>
</comment>
<comment type="catalytic activity">
    <reaction evidence="1">
        <text>[protein]-L-glutamate 5-O-methyl ester + H2O = L-glutamyl-[protein] + methanol + H(+)</text>
        <dbReference type="Rhea" id="RHEA:23236"/>
        <dbReference type="Rhea" id="RHEA-COMP:10208"/>
        <dbReference type="Rhea" id="RHEA-COMP:10311"/>
        <dbReference type="ChEBI" id="CHEBI:15377"/>
        <dbReference type="ChEBI" id="CHEBI:15378"/>
        <dbReference type="ChEBI" id="CHEBI:17790"/>
        <dbReference type="ChEBI" id="CHEBI:29973"/>
        <dbReference type="ChEBI" id="CHEBI:82795"/>
        <dbReference type="EC" id="3.1.1.61"/>
    </reaction>
</comment>
<comment type="catalytic activity">
    <reaction evidence="1">
        <text>L-glutaminyl-[protein] + H2O = L-glutamyl-[protein] + NH4(+)</text>
        <dbReference type="Rhea" id="RHEA:16441"/>
        <dbReference type="Rhea" id="RHEA-COMP:10207"/>
        <dbReference type="Rhea" id="RHEA-COMP:10208"/>
        <dbReference type="ChEBI" id="CHEBI:15377"/>
        <dbReference type="ChEBI" id="CHEBI:28938"/>
        <dbReference type="ChEBI" id="CHEBI:29973"/>
        <dbReference type="ChEBI" id="CHEBI:30011"/>
        <dbReference type="EC" id="3.5.1.44"/>
    </reaction>
</comment>
<comment type="subcellular location">
    <subcellularLocation>
        <location evidence="1">Cytoplasm</location>
    </subcellularLocation>
</comment>
<comment type="domain">
    <text evidence="1">Contains a C-terminal catalytic domain, and an N-terminal region which modulates catalytic activity.</text>
</comment>
<comment type="PTM">
    <text evidence="1">Phosphorylated by CheA. Phosphorylation of the N-terminal regulatory domain activates the methylesterase activity.</text>
</comment>
<comment type="similarity">
    <text evidence="1">Belongs to the CheB family.</text>
</comment>
<proteinExistence type="inferred from homology"/>
<gene>
    <name evidence="1" type="primary">cheB</name>
    <name type="ordered locus">Nwi_0523</name>
</gene>
<feature type="chain" id="PRO_0000225464" description="Protein-glutamate methylesterase/protein-glutamine glutaminase">
    <location>
        <begin position="1"/>
        <end position="425"/>
    </location>
</feature>
<feature type="domain" description="Response regulatory" evidence="1">
    <location>
        <begin position="22"/>
        <end position="140"/>
    </location>
</feature>
<feature type="domain" description="CheB-type methylesterase" evidence="1">
    <location>
        <begin position="221"/>
        <end position="417"/>
    </location>
</feature>
<feature type="region of interest" description="Disordered" evidence="2">
    <location>
        <begin position="150"/>
        <end position="174"/>
    </location>
</feature>
<feature type="region of interest" description="Disordered" evidence="2">
    <location>
        <begin position="203"/>
        <end position="223"/>
    </location>
</feature>
<feature type="active site" evidence="1">
    <location>
        <position position="241"/>
    </location>
</feature>
<feature type="active site" evidence="1">
    <location>
        <position position="269"/>
    </location>
</feature>
<feature type="active site" evidence="1">
    <location>
        <position position="365"/>
    </location>
</feature>
<feature type="modified residue" description="4-aspartylphosphate" evidence="1">
    <location>
        <position position="73"/>
    </location>
</feature>